<comment type="function">
    <text evidence="1">Is required not only for elongation of protein synthesis but also for the initiation of all mRNA translation through initiator tRNA(fMet) aminoacylation.</text>
</comment>
<comment type="catalytic activity">
    <reaction evidence="1">
        <text>tRNA(Met) + L-methionine + ATP = L-methionyl-tRNA(Met) + AMP + diphosphate</text>
        <dbReference type="Rhea" id="RHEA:13481"/>
        <dbReference type="Rhea" id="RHEA-COMP:9667"/>
        <dbReference type="Rhea" id="RHEA-COMP:9698"/>
        <dbReference type="ChEBI" id="CHEBI:30616"/>
        <dbReference type="ChEBI" id="CHEBI:33019"/>
        <dbReference type="ChEBI" id="CHEBI:57844"/>
        <dbReference type="ChEBI" id="CHEBI:78442"/>
        <dbReference type="ChEBI" id="CHEBI:78530"/>
        <dbReference type="ChEBI" id="CHEBI:456215"/>
        <dbReference type="EC" id="6.1.1.10"/>
    </reaction>
</comment>
<comment type="cofactor">
    <cofactor evidence="1">
        <name>Zn(2+)</name>
        <dbReference type="ChEBI" id="CHEBI:29105"/>
    </cofactor>
    <text evidence="1">Binds 1 zinc ion per subunit.</text>
</comment>
<comment type="subunit">
    <text evidence="1">Homodimer.</text>
</comment>
<comment type="subcellular location">
    <subcellularLocation>
        <location evidence="1">Cytoplasm</location>
    </subcellularLocation>
</comment>
<comment type="similarity">
    <text evidence="1">Belongs to the class-I aminoacyl-tRNA synthetase family. MetG type 1 subfamily.</text>
</comment>
<reference key="1">
    <citation type="submission" date="2008-04" db="EMBL/GenBank/DDBJ databases">
        <title>Complete sequence of chromosome 1 of Burkholderia ambifaria MC40-6.</title>
        <authorList>
            <person name="Copeland A."/>
            <person name="Lucas S."/>
            <person name="Lapidus A."/>
            <person name="Glavina del Rio T."/>
            <person name="Dalin E."/>
            <person name="Tice H."/>
            <person name="Pitluck S."/>
            <person name="Chain P."/>
            <person name="Malfatti S."/>
            <person name="Shin M."/>
            <person name="Vergez L."/>
            <person name="Lang D."/>
            <person name="Schmutz J."/>
            <person name="Larimer F."/>
            <person name="Land M."/>
            <person name="Hauser L."/>
            <person name="Kyrpides N."/>
            <person name="Lykidis A."/>
            <person name="Ramette A."/>
            <person name="Konstantinidis K."/>
            <person name="Tiedje J."/>
            <person name="Richardson P."/>
        </authorList>
    </citation>
    <scope>NUCLEOTIDE SEQUENCE [LARGE SCALE GENOMIC DNA]</scope>
    <source>
        <strain>MC40-6</strain>
    </source>
</reference>
<accession>B1YUT2</accession>
<proteinExistence type="inferred from homology"/>
<dbReference type="EC" id="6.1.1.10" evidence="1"/>
<dbReference type="EMBL" id="CP001025">
    <property type="protein sequence ID" value="ACB64828.1"/>
    <property type="molecule type" value="Genomic_DNA"/>
</dbReference>
<dbReference type="RefSeq" id="WP_012364457.1">
    <property type="nucleotide sequence ID" value="NC_010551.1"/>
</dbReference>
<dbReference type="SMR" id="B1YUT2"/>
<dbReference type="KEGG" id="bac:BamMC406_2350"/>
<dbReference type="HOGENOM" id="CLU_009710_7_0_4"/>
<dbReference type="OrthoDB" id="9810191at2"/>
<dbReference type="Proteomes" id="UP000001680">
    <property type="component" value="Chromosome 1"/>
</dbReference>
<dbReference type="GO" id="GO:0005829">
    <property type="term" value="C:cytosol"/>
    <property type="evidence" value="ECO:0007669"/>
    <property type="project" value="TreeGrafter"/>
</dbReference>
<dbReference type="GO" id="GO:0005524">
    <property type="term" value="F:ATP binding"/>
    <property type="evidence" value="ECO:0007669"/>
    <property type="project" value="UniProtKB-UniRule"/>
</dbReference>
<dbReference type="GO" id="GO:0046872">
    <property type="term" value="F:metal ion binding"/>
    <property type="evidence" value="ECO:0007669"/>
    <property type="project" value="UniProtKB-KW"/>
</dbReference>
<dbReference type="GO" id="GO:0004825">
    <property type="term" value="F:methionine-tRNA ligase activity"/>
    <property type="evidence" value="ECO:0007669"/>
    <property type="project" value="UniProtKB-UniRule"/>
</dbReference>
<dbReference type="GO" id="GO:0000049">
    <property type="term" value="F:tRNA binding"/>
    <property type="evidence" value="ECO:0007669"/>
    <property type="project" value="UniProtKB-KW"/>
</dbReference>
<dbReference type="GO" id="GO:0006431">
    <property type="term" value="P:methionyl-tRNA aminoacylation"/>
    <property type="evidence" value="ECO:0007669"/>
    <property type="project" value="UniProtKB-UniRule"/>
</dbReference>
<dbReference type="CDD" id="cd07957">
    <property type="entry name" value="Anticodon_Ia_Met"/>
    <property type="match status" value="1"/>
</dbReference>
<dbReference type="CDD" id="cd00814">
    <property type="entry name" value="MetRS_core"/>
    <property type="match status" value="1"/>
</dbReference>
<dbReference type="CDD" id="cd02800">
    <property type="entry name" value="tRNA_bind_EcMetRS_like"/>
    <property type="match status" value="1"/>
</dbReference>
<dbReference type="FunFam" id="2.20.28.20:FF:000001">
    <property type="entry name" value="Methionine--tRNA ligase"/>
    <property type="match status" value="1"/>
</dbReference>
<dbReference type="FunFam" id="2.40.50.140:FF:000042">
    <property type="entry name" value="Methionine--tRNA ligase"/>
    <property type="match status" value="1"/>
</dbReference>
<dbReference type="Gene3D" id="3.40.50.620">
    <property type="entry name" value="HUPs"/>
    <property type="match status" value="1"/>
</dbReference>
<dbReference type="Gene3D" id="1.10.730.10">
    <property type="entry name" value="Isoleucyl-tRNA Synthetase, Domain 1"/>
    <property type="match status" value="1"/>
</dbReference>
<dbReference type="Gene3D" id="2.20.28.20">
    <property type="entry name" value="Methionyl-tRNA synthetase, Zn-domain"/>
    <property type="match status" value="1"/>
</dbReference>
<dbReference type="Gene3D" id="2.40.50.140">
    <property type="entry name" value="Nucleic acid-binding proteins"/>
    <property type="match status" value="1"/>
</dbReference>
<dbReference type="HAMAP" id="MF_00098">
    <property type="entry name" value="Met_tRNA_synth_type1"/>
    <property type="match status" value="1"/>
</dbReference>
<dbReference type="InterPro" id="IPR001412">
    <property type="entry name" value="aa-tRNA-synth_I_CS"/>
</dbReference>
<dbReference type="InterPro" id="IPR041872">
    <property type="entry name" value="Anticodon_Met"/>
</dbReference>
<dbReference type="InterPro" id="IPR013155">
    <property type="entry name" value="M/V/L/I-tRNA-synth_anticd-bd"/>
</dbReference>
<dbReference type="InterPro" id="IPR004495">
    <property type="entry name" value="Met-tRNA-synth_bsu_C"/>
</dbReference>
<dbReference type="InterPro" id="IPR023458">
    <property type="entry name" value="Met-tRNA_ligase_1"/>
</dbReference>
<dbReference type="InterPro" id="IPR014758">
    <property type="entry name" value="Met-tRNA_synth"/>
</dbReference>
<dbReference type="InterPro" id="IPR015413">
    <property type="entry name" value="Methionyl/Leucyl_tRNA_Synth"/>
</dbReference>
<dbReference type="InterPro" id="IPR033911">
    <property type="entry name" value="MetRS_core"/>
</dbReference>
<dbReference type="InterPro" id="IPR029038">
    <property type="entry name" value="MetRS_Zn"/>
</dbReference>
<dbReference type="InterPro" id="IPR012340">
    <property type="entry name" value="NA-bd_OB-fold"/>
</dbReference>
<dbReference type="InterPro" id="IPR014729">
    <property type="entry name" value="Rossmann-like_a/b/a_fold"/>
</dbReference>
<dbReference type="InterPro" id="IPR002547">
    <property type="entry name" value="tRNA-bd_dom"/>
</dbReference>
<dbReference type="InterPro" id="IPR009080">
    <property type="entry name" value="tRNAsynth_Ia_anticodon-bd"/>
</dbReference>
<dbReference type="NCBIfam" id="TIGR00398">
    <property type="entry name" value="metG"/>
    <property type="match status" value="1"/>
</dbReference>
<dbReference type="NCBIfam" id="TIGR00399">
    <property type="entry name" value="metG_C_term"/>
    <property type="match status" value="1"/>
</dbReference>
<dbReference type="NCBIfam" id="NF001100">
    <property type="entry name" value="PRK00133.1"/>
    <property type="match status" value="1"/>
</dbReference>
<dbReference type="PANTHER" id="PTHR45765">
    <property type="entry name" value="METHIONINE--TRNA LIGASE"/>
    <property type="match status" value="1"/>
</dbReference>
<dbReference type="PANTHER" id="PTHR45765:SF1">
    <property type="entry name" value="METHIONINE--TRNA LIGASE, CYTOPLASMIC"/>
    <property type="match status" value="1"/>
</dbReference>
<dbReference type="Pfam" id="PF08264">
    <property type="entry name" value="Anticodon_1"/>
    <property type="match status" value="1"/>
</dbReference>
<dbReference type="Pfam" id="PF09334">
    <property type="entry name" value="tRNA-synt_1g"/>
    <property type="match status" value="1"/>
</dbReference>
<dbReference type="Pfam" id="PF01588">
    <property type="entry name" value="tRNA_bind"/>
    <property type="match status" value="1"/>
</dbReference>
<dbReference type="PRINTS" id="PR01041">
    <property type="entry name" value="TRNASYNTHMET"/>
</dbReference>
<dbReference type="SUPFAM" id="SSF47323">
    <property type="entry name" value="Anticodon-binding domain of a subclass of class I aminoacyl-tRNA synthetases"/>
    <property type="match status" value="1"/>
</dbReference>
<dbReference type="SUPFAM" id="SSF57770">
    <property type="entry name" value="Methionyl-tRNA synthetase (MetRS), Zn-domain"/>
    <property type="match status" value="1"/>
</dbReference>
<dbReference type="SUPFAM" id="SSF50249">
    <property type="entry name" value="Nucleic acid-binding proteins"/>
    <property type="match status" value="1"/>
</dbReference>
<dbReference type="SUPFAM" id="SSF52374">
    <property type="entry name" value="Nucleotidylyl transferase"/>
    <property type="match status" value="1"/>
</dbReference>
<dbReference type="PROSITE" id="PS00178">
    <property type="entry name" value="AA_TRNA_LIGASE_I"/>
    <property type="match status" value="1"/>
</dbReference>
<dbReference type="PROSITE" id="PS50886">
    <property type="entry name" value="TRBD"/>
    <property type="match status" value="1"/>
</dbReference>
<keyword id="KW-0030">Aminoacyl-tRNA synthetase</keyword>
<keyword id="KW-0067">ATP-binding</keyword>
<keyword id="KW-0963">Cytoplasm</keyword>
<keyword id="KW-0436">Ligase</keyword>
<keyword id="KW-0479">Metal-binding</keyword>
<keyword id="KW-0547">Nucleotide-binding</keyword>
<keyword id="KW-0648">Protein biosynthesis</keyword>
<keyword id="KW-0694">RNA-binding</keyword>
<keyword id="KW-0820">tRNA-binding</keyword>
<keyword id="KW-0862">Zinc</keyword>
<organism>
    <name type="scientific">Burkholderia ambifaria (strain MC40-6)</name>
    <dbReference type="NCBI Taxonomy" id="398577"/>
    <lineage>
        <taxon>Bacteria</taxon>
        <taxon>Pseudomonadati</taxon>
        <taxon>Pseudomonadota</taxon>
        <taxon>Betaproteobacteria</taxon>
        <taxon>Burkholderiales</taxon>
        <taxon>Burkholderiaceae</taxon>
        <taxon>Burkholderia</taxon>
        <taxon>Burkholderia cepacia complex</taxon>
    </lineage>
</organism>
<evidence type="ECO:0000255" key="1">
    <source>
        <dbReference type="HAMAP-Rule" id="MF_00098"/>
    </source>
</evidence>
<feature type="chain" id="PRO_1000093700" description="Methionine--tRNA ligase">
    <location>
        <begin position="1"/>
        <end position="720"/>
    </location>
</feature>
<feature type="domain" description="tRNA-binding" evidence="1">
    <location>
        <begin position="614"/>
        <end position="720"/>
    </location>
</feature>
<feature type="short sequence motif" description="'HIGH' region">
    <location>
        <begin position="27"/>
        <end position="37"/>
    </location>
</feature>
<feature type="short sequence motif" description="'KMSKS' region">
    <location>
        <begin position="348"/>
        <end position="352"/>
    </location>
</feature>
<feature type="binding site" evidence="1">
    <location>
        <position position="158"/>
    </location>
    <ligand>
        <name>Zn(2+)</name>
        <dbReference type="ChEBI" id="CHEBI:29105"/>
    </ligand>
</feature>
<feature type="binding site" evidence="1">
    <location>
        <position position="161"/>
    </location>
    <ligand>
        <name>Zn(2+)</name>
        <dbReference type="ChEBI" id="CHEBI:29105"/>
    </ligand>
</feature>
<feature type="binding site" evidence="1">
    <location>
        <position position="171"/>
    </location>
    <ligand>
        <name>Zn(2+)</name>
        <dbReference type="ChEBI" id="CHEBI:29105"/>
    </ligand>
</feature>
<feature type="binding site" evidence="1">
    <location>
        <position position="174"/>
    </location>
    <ligand>
        <name>Zn(2+)</name>
        <dbReference type="ChEBI" id="CHEBI:29105"/>
    </ligand>
</feature>
<feature type="binding site" evidence="1">
    <location>
        <position position="351"/>
    </location>
    <ligand>
        <name>ATP</name>
        <dbReference type="ChEBI" id="CHEBI:30616"/>
    </ligand>
</feature>
<sequence>MSASDLTSVQATAPQGRRQILVTSALPYANGQIHIGHLVEYIQTDIWVRTLRMHGHEVYYIGADDTHGTPVMLRAEKEGLTPKQLIDRVWTEHKRDFDSFGVSFDNFYSTDSDENRVLSESIYLALKENGLIAERAIEQAYDPVKEMFLPDRFIKGECPKCHAKDQYGDNCEVCGSTYLPTELLNPYSVVSGATPVRKTSTHYFFRLSDPRCESFLREWVSGLAQPEATNKMREWLGDAGEAKLADWDISRDAPYFGFEIPGAPGKYFYVWLDAPVGYYASFKNLCDREGIDFDAWIRAGSTAEQYHFIGKDILYFHTLFWPAMLEFSGHRTPTNVFAHGFLTVDGAKMSKSRGTFITAQSYIDTGLNPEWLRYYFAAKLNATMEDIDLNLDDFQARVNSDLVGKYVNIASRAAGFLIKRFDGRVQDSAMNHPLVAKLRDAIASIAAHYEGREYSRALRQTMELADEVNAYVDGAKPWELAKDPANAVALHETCSVSLEAFRLLSLALKPVMPRVAEAVEAFFGVAPLAWADAAKPLSSAQPIKAYQHLMTRVDPKQIDALLAANRDSLQADAAGAAAAGTTAANAAKDAKSAKANAKAVAANGADDAPISIDDFAKVDLRIAKIVACQAVEGSDKLLQLTLDIGEEKTRNVFSGIKSAYQPEQLVGKLTVMVANLAPRKMKFGLSEGMVLAASAADEKAEPGLYILEPHSGAKPGMRVK</sequence>
<gene>
    <name evidence="1" type="primary">metG</name>
    <name type="ordered locus">BamMC406_2350</name>
</gene>
<protein>
    <recommendedName>
        <fullName evidence="1">Methionine--tRNA ligase</fullName>
        <ecNumber evidence="1">6.1.1.10</ecNumber>
    </recommendedName>
    <alternativeName>
        <fullName evidence="1">Methionyl-tRNA synthetase</fullName>
        <shortName evidence="1">MetRS</shortName>
    </alternativeName>
</protein>
<name>SYM_BURA4</name>